<reference key="1">
    <citation type="submission" date="2005-03" db="EMBL/GenBank/DDBJ databases">
        <title>Brevibacillus brevis strain 47, complete genome.</title>
        <authorList>
            <person name="Hosoyama A."/>
            <person name="Yamada R."/>
            <person name="Hongo Y."/>
            <person name="Terui Y."/>
            <person name="Ankai A."/>
            <person name="Masuyama W."/>
            <person name="Sekiguchi M."/>
            <person name="Takeda T."/>
            <person name="Asano K."/>
            <person name="Ohji S."/>
            <person name="Ichikawa N."/>
            <person name="Narita S."/>
            <person name="Aoki N."/>
            <person name="Miura H."/>
            <person name="Matsushita S."/>
            <person name="Sekigawa T."/>
            <person name="Yamagata H."/>
            <person name="Yoshikawa H."/>
            <person name="Udaka S."/>
            <person name="Tanikawa S."/>
            <person name="Fujita N."/>
        </authorList>
    </citation>
    <scope>NUCLEOTIDE SEQUENCE [LARGE SCALE GENOMIC DNA]</scope>
    <source>
        <strain>47 / JCM 6285 / NBRC 100599</strain>
    </source>
</reference>
<proteinExistence type="inferred from homology"/>
<keyword id="KW-0028">Amino-acid biosynthesis</keyword>
<keyword id="KW-0057">Aromatic amino acid biosynthesis</keyword>
<keyword id="KW-0274">FAD</keyword>
<keyword id="KW-0285">Flavoprotein</keyword>
<keyword id="KW-0288">FMN</keyword>
<keyword id="KW-0456">Lyase</keyword>
<keyword id="KW-0521">NADP</keyword>
<keyword id="KW-1185">Reference proteome</keyword>
<feature type="chain" id="PRO_1000132756" description="Chorismate synthase">
    <location>
        <begin position="1"/>
        <end position="387"/>
    </location>
</feature>
<feature type="region of interest" description="Disordered" evidence="2">
    <location>
        <begin position="92"/>
        <end position="113"/>
    </location>
</feature>
<feature type="binding site" evidence="1">
    <location>
        <position position="39"/>
    </location>
    <ligand>
        <name>NADP(+)</name>
        <dbReference type="ChEBI" id="CHEBI:58349"/>
    </ligand>
</feature>
<feature type="binding site" evidence="1">
    <location>
        <position position="45"/>
    </location>
    <ligand>
        <name>NADP(+)</name>
        <dbReference type="ChEBI" id="CHEBI:58349"/>
    </ligand>
</feature>
<feature type="binding site" evidence="1">
    <location>
        <begin position="130"/>
        <end position="132"/>
    </location>
    <ligand>
        <name>FMN</name>
        <dbReference type="ChEBI" id="CHEBI:58210"/>
    </ligand>
</feature>
<feature type="binding site" evidence="1">
    <location>
        <begin position="250"/>
        <end position="251"/>
    </location>
    <ligand>
        <name>FMN</name>
        <dbReference type="ChEBI" id="CHEBI:58210"/>
    </ligand>
</feature>
<feature type="binding site" evidence="1">
    <location>
        <position position="295"/>
    </location>
    <ligand>
        <name>FMN</name>
        <dbReference type="ChEBI" id="CHEBI:58210"/>
    </ligand>
</feature>
<feature type="binding site" evidence="1">
    <location>
        <begin position="310"/>
        <end position="314"/>
    </location>
    <ligand>
        <name>FMN</name>
        <dbReference type="ChEBI" id="CHEBI:58210"/>
    </ligand>
</feature>
<feature type="binding site" evidence="1">
    <location>
        <position position="336"/>
    </location>
    <ligand>
        <name>FMN</name>
        <dbReference type="ChEBI" id="CHEBI:58210"/>
    </ligand>
</feature>
<accession>C0ZCD8</accession>
<sequence length="387" mass="42547">MRYLTAGESHGPQLTAIIEGVPSNLPISIEEINEQLARRQKGHGRGRRMQIEKDQVKILSGVRHGYTTGAPITLVVENKDWTHWQGIMSAEPVEEGSEEKRRVSRPRPGHADLNGAIKYHQRDMRNILERSSARETTVRVAVGAVARQLLAQFGIRIGGQVLQINEIVAKRQEVSLDELIARTEESPVRCLDKEAEPLMMAAIDKAKEDGDSLGGTVEVIVEGVPIGLGSHVQWDRKLDGRLAQAIMSIQAFKGVEIGIGFEAAGLKGSQVHDEIVWNEETGYSRKTNRAGGLEGGMTTGMPVVVRGVMKPIPTLYKPLMSVDIDSREPFSASIERSDSCAVPAASVVAEAVVAWEIANAMCEKFPSDSLDDMEENVRQYRAYTEKF</sequence>
<organism>
    <name type="scientific">Brevibacillus brevis (strain 47 / JCM 6285 / NBRC 100599)</name>
    <dbReference type="NCBI Taxonomy" id="358681"/>
    <lineage>
        <taxon>Bacteria</taxon>
        <taxon>Bacillati</taxon>
        <taxon>Bacillota</taxon>
        <taxon>Bacilli</taxon>
        <taxon>Bacillales</taxon>
        <taxon>Paenibacillaceae</taxon>
        <taxon>Brevibacillus</taxon>
    </lineage>
</organism>
<evidence type="ECO:0000255" key="1">
    <source>
        <dbReference type="HAMAP-Rule" id="MF_00300"/>
    </source>
</evidence>
<evidence type="ECO:0000256" key="2">
    <source>
        <dbReference type="SAM" id="MobiDB-lite"/>
    </source>
</evidence>
<name>AROC_BREBN</name>
<dbReference type="EC" id="4.2.3.5" evidence="1"/>
<dbReference type="EMBL" id="AP008955">
    <property type="protein sequence ID" value="BAH43447.1"/>
    <property type="molecule type" value="Genomic_DNA"/>
</dbReference>
<dbReference type="RefSeq" id="WP_012686154.1">
    <property type="nucleotide sequence ID" value="NC_012491.1"/>
</dbReference>
<dbReference type="SMR" id="C0ZCD8"/>
<dbReference type="STRING" id="358681.BBR47_24700"/>
<dbReference type="KEGG" id="bbe:BBR47_24700"/>
<dbReference type="eggNOG" id="COG0082">
    <property type="taxonomic scope" value="Bacteria"/>
</dbReference>
<dbReference type="HOGENOM" id="CLU_034547_2_0_9"/>
<dbReference type="UniPathway" id="UPA00053">
    <property type="reaction ID" value="UER00090"/>
</dbReference>
<dbReference type="Proteomes" id="UP000001877">
    <property type="component" value="Chromosome"/>
</dbReference>
<dbReference type="GO" id="GO:0005829">
    <property type="term" value="C:cytosol"/>
    <property type="evidence" value="ECO:0007669"/>
    <property type="project" value="TreeGrafter"/>
</dbReference>
<dbReference type="GO" id="GO:0004107">
    <property type="term" value="F:chorismate synthase activity"/>
    <property type="evidence" value="ECO:0007669"/>
    <property type="project" value="UniProtKB-UniRule"/>
</dbReference>
<dbReference type="GO" id="GO:0010181">
    <property type="term" value="F:FMN binding"/>
    <property type="evidence" value="ECO:0007669"/>
    <property type="project" value="TreeGrafter"/>
</dbReference>
<dbReference type="GO" id="GO:0008652">
    <property type="term" value="P:amino acid biosynthetic process"/>
    <property type="evidence" value="ECO:0007669"/>
    <property type="project" value="UniProtKB-KW"/>
</dbReference>
<dbReference type="GO" id="GO:0009073">
    <property type="term" value="P:aromatic amino acid family biosynthetic process"/>
    <property type="evidence" value="ECO:0007669"/>
    <property type="project" value="UniProtKB-KW"/>
</dbReference>
<dbReference type="GO" id="GO:0009423">
    <property type="term" value="P:chorismate biosynthetic process"/>
    <property type="evidence" value="ECO:0007669"/>
    <property type="project" value="UniProtKB-UniRule"/>
</dbReference>
<dbReference type="CDD" id="cd07304">
    <property type="entry name" value="Chorismate_synthase"/>
    <property type="match status" value="1"/>
</dbReference>
<dbReference type="FunFam" id="3.60.150.10:FF:000002">
    <property type="entry name" value="Chorismate synthase"/>
    <property type="match status" value="1"/>
</dbReference>
<dbReference type="Gene3D" id="3.60.150.10">
    <property type="entry name" value="Chorismate synthase AroC"/>
    <property type="match status" value="1"/>
</dbReference>
<dbReference type="HAMAP" id="MF_00300">
    <property type="entry name" value="Chorismate_synth"/>
    <property type="match status" value="1"/>
</dbReference>
<dbReference type="InterPro" id="IPR000453">
    <property type="entry name" value="Chorismate_synth"/>
</dbReference>
<dbReference type="InterPro" id="IPR035904">
    <property type="entry name" value="Chorismate_synth_AroC_sf"/>
</dbReference>
<dbReference type="InterPro" id="IPR020541">
    <property type="entry name" value="Chorismate_synthase_CS"/>
</dbReference>
<dbReference type="NCBIfam" id="TIGR00033">
    <property type="entry name" value="aroC"/>
    <property type="match status" value="1"/>
</dbReference>
<dbReference type="NCBIfam" id="NF003793">
    <property type="entry name" value="PRK05382.1"/>
    <property type="match status" value="1"/>
</dbReference>
<dbReference type="PANTHER" id="PTHR21085">
    <property type="entry name" value="CHORISMATE SYNTHASE"/>
    <property type="match status" value="1"/>
</dbReference>
<dbReference type="PANTHER" id="PTHR21085:SF0">
    <property type="entry name" value="CHORISMATE SYNTHASE"/>
    <property type="match status" value="1"/>
</dbReference>
<dbReference type="Pfam" id="PF01264">
    <property type="entry name" value="Chorismate_synt"/>
    <property type="match status" value="1"/>
</dbReference>
<dbReference type="PIRSF" id="PIRSF001456">
    <property type="entry name" value="Chorismate_synth"/>
    <property type="match status" value="1"/>
</dbReference>
<dbReference type="SUPFAM" id="SSF103263">
    <property type="entry name" value="Chorismate synthase, AroC"/>
    <property type="match status" value="1"/>
</dbReference>
<dbReference type="PROSITE" id="PS00787">
    <property type="entry name" value="CHORISMATE_SYNTHASE_1"/>
    <property type="match status" value="1"/>
</dbReference>
<dbReference type="PROSITE" id="PS00788">
    <property type="entry name" value="CHORISMATE_SYNTHASE_2"/>
    <property type="match status" value="1"/>
</dbReference>
<dbReference type="PROSITE" id="PS00789">
    <property type="entry name" value="CHORISMATE_SYNTHASE_3"/>
    <property type="match status" value="1"/>
</dbReference>
<gene>
    <name evidence="1" type="primary">aroC</name>
    <name type="ordered locus">BBR47_24700</name>
</gene>
<protein>
    <recommendedName>
        <fullName evidence="1">Chorismate synthase</fullName>
        <shortName evidence="1">CS</shortName>
        <ecNumber evidence="1">4.2.3.5</ecNumber>
    </recommendedName>
    <alternativeName>
        <fullName evidence="1">5-enolpyruvylshikimate-3-phosphate phospholyase</fullName>
    </alternativeName>
</protein>
<comment type="function">
    <text evidence="1">Catalyzes the anti-1,4-elimination of the C-3 phosphate and the C-6 proR hydrogen from 5-enolpyruvylshikimate-3-phosphate (EPSP) to yield chorismate, which is the branch point compound that serves as the starting substrate for the three terminal pathways of aromatic amino acid biosynthesis. This reaction introduces a second double bond into the aromatic ring system.</text>
</comment>
<comment type="catalytic activity">
    <reaction evidence="1">
        <text>5-O-(1-carboxyvinyl)-3-phosphoshikimate = chorismate + phosphate</text>
        <dbReference type="Rhea" id="RHEA:21020"/>
        <dbReference type="ChEBI" id="CHEBI:29748"/>
        <dbReference type="ChEBI" id="CHEBI:43474"/>
        <dbReference type="ChEBI" id="CHEBI:57701"/>
        <dbReference type="EC" id="4.2.3.5"/>
    </reaction>
</comment>
<comment type="cofactor">
    <cofactor evidence="1">
        <name>FMNH2</name>
        <dbReference type="ChEBI" id="CHEBI:57618"/>
    </cofactor>
    <text evidence="1">Reduced FMN (FMNH(2)).</text>
</comment>
<comment type="pathway">
    <text evidence="1">Metabolic intermediate biosynthesis; chorismate biosynthesis; chorismate from D-erythrose 4-phosphate and phosphoenolpyruvate: step 7/7.</text>
</comment>
<comment type="subunit">
    <text evidence="1">Homotetramer.</text>
</comment>
<comment type="similarity">
    <text evidence="1">Belongs to the chorismate synthase family.</text>
</comment>